<gene>
    <name evidence="1" type="primary">ubiE</name>
    <name type="ordered locus">FTM_0519</name>
</gene>
<feature type="chain" id="PRO_1000187768" description="Ubiquinone/menaquinone biosynthesis C-methyltransferase UbiE">
    <location>
        <begin position="1"/>
        <end position="250"/>
    </location>
</feature>
<feature type="binding site" evidence="1">
    <location>
        <position position="73"/>
    </location>
    <ligand>
        <name>S-adenosyl-L-methionine</name>
        <dbReference type="ChEBI" id="CHEBI:59789"/>
    </ligand>
</feature>
<feature type="binding site" evidence="1">
    <location>
        <position position="94"/>
    </location>
    <ligand>
        <name>S-adenosyl-L-methionine</name>
        <dbReference type="ChEBI" id="CHEBI:59789"/>
    </ligand>
</feature>
<feature type="binding site" evidence="1">
    <location>
        <begin position="122"/>
        <end position="123"/>
    </location>
    <ligand>
        <name>S-adenosyl-L-methionine</name>
        <dbReference type="ChEBI" id="CHEBI:59789"/>
    </ligand>
</feature>
<feature type="binding site" evidence="1">
    <location>
        <position position="139"/>
    </location>
    <ligand>
        <name>S-adenosyl-L-methionine</name>
        <dbReference type="ChEBI" id="CHEBI:59789"/>
    </ligand>
</feature>
<proteinExistence type="inferred from homology"/>
<dbReference type="EC" id="2.1.1.163" evidence="1"/>
<dbReference type="EC" id="2.1.1.201" evidence="1"/>
<dbReference type="EMBL" id="CP000915">
    <property type="protein sequence ID" value="ACD30534.1"/>
    <property type="molecule type" value="Genomic_DNA"/>
</dbReference>
<dbReference type="SMR" id="B2SFA2"/>
<dbReference type="KEGG" id="ftm:FTM_0519"/>
<dbReference type="HOGENOM" id="CLU_037990_0_0_6"/>
<dbReference type="UniPathway" id="UPA00079">
    <property type="reaction ID" value="UER00169"/>
</dbReference>
<dbReference type="UniPathway" id="UPA00232"/>
<dbReference type="GO" id="GO:0008425">
    <property type="term" value="F:2-methoxy-6-polyprenyl-1,4-benzoquinol methyltransferase activity"/>
    <property type="evidence" value="ECO:0007669"/>
    <property type="project" value="UniProtKB-UniRule"/>
</dbReference>
<dbReference type="GO" id="GO:0043770">
    <property type="term" value="F:demethylmenaquinone methyltransferase activity"/>
    <property type="evidence" value="ECO:0007669"/>
    <property type="project" value="UniProtKB-UniRule"/>
</dbReference>
<dbReference type="GO" id="GO:0009060">
    <property type="term" value="P:aerobic respiration"/>
    <property type="evidence" value="ECO:0007669"/>
    <property type="project" value="UniProtKB-UniRule"/>
</dbReference>
<dbReference type="GO" id="GO:0009234">
    <property type="term" value="P:menaquinone biosynthetic process"/>
    <property type="evidence" value="ECO:0007669"/>
    <property type="project" value="UniProtKB-UniRule"/>
</dbReference>
<dbReference type="GO" id="GO:0032259">
    <property type="term" value="P:methylation"/>
    <property type="evidence" value="ECO:0007669"/>
    <property type="project" value="UniProtKB-KW"/>
</dbReference>
<dbReference type="CDD" id="cd02440">
    <property type="entry name" value="AdoMet_MTases"/>
    <property type="match status" value="1"/>
</dbReference>
<dbReference type="FunFam" id="3.40.50.150:FF:000014">
    <property type="entry name" value="Ubiquinone/menaquinone biosynthesis C-methyltransferase UbiE"/>
    <property type="match status" value="1"/>
</dbReference>
<dbReference type="Gene3D" id="3.40.50.150">
    <property type="entry name" value="Vaccinia Virus protein VP39"/>
    <property type="match status" value="1"/>
</dbReference>
<dbReference type="HAMAP" id="MF_01813">
    <property type="entry name" value="MenG_UbiE_methyltr"/>
    <property type="match status" value="1"/>
</dbReference>
<dbReference type="InterPro" id="IPR029063">
    <property type="entry name" value="SAM-dependent_MTases_sf"/>
</dbReference>
<dbReference type="InterPro" id="IPR004033">
    <property type="entry name" value="UbiE/COQ5_MeTrFase"/>
</dbReference>
<dbReference type="InterPro" id="IPR023576">
    <property type="entry name" value="UbiE/COQ5_MeTrFase_CS"/>
</dbReference>
<dbReference type="NCBIfam" id="TIGR01934">
    <property type="entry name" value="MenG_MenH_UbiE"/>
    <property type="match status" value="1"/>
</dbReference>
<dbReference type="NCBIfam" id="NF001240">
    <property type="entry name" value="PRK00216.1-1"/>
    <property type="match status" value="1"/>
</dbReference>
<dbReference type="NCBIfam" id="NF001242">
    <property type="entry name" value="PRK00216.1-3"/>
    <property type="match status" value="1"/>
</dbReference>
<dbReference type="NCBIfam" id="NF001244">
    <property type="entry name" value="PRK00216.1-5"/>
    <property type="match status" value="1"/>
</dbReference>
<dbReference type="PANTHER" id="PTHR43591:SF24">
    <property type="entry name" value="2-METHOXY-6-POLYPRENYL-1,4-BENZOQUINOL METHYLASE, MITOCHONDRIAL"/>
    <property type="match status" value="1"/>
</dbReference>
<dbReference type="PANTHER" id="PTHR43591">
    <property type="entry name" value="METHYLTRANSFERASE"/>
    <property type="match status" value="1"/>
</dbReference>
<dbReference type="Pfam" id="PF01209">
    <property type="entry name" value="Ubie_methyltran"/>
    <property type="match status" value="1"/>
</dbReference>
<dbReference type="SUPFAM" id="SSF53335">
    <property type="entry name" value="S-adenosyl-L-methionine-dependent methyltransferases"/>
    <property type="match status" value="1"/>
</dbReference>
<dbReference type="PROSITE" id="PS51608">
    <property type="entry name" value="SAM_MT_UBIE"/>
    <property type="match status" value="1"/>
</dbReference>
<dbReference type="PROSITE" id="PS01183">
    <property type="entry name" value="UBIE_1"/>
    <property type="match status" value="1"/>
</dbReference>
<dbReference type="PROSITE" id="PS01184">
    <property type="entry name" value="UBIE_2"/>
    <property type="match status" value="1"/>
</dbReference>
<sequence length="250" mass="28057">MSKENKTTDFGFTQVPWEEKQKKVAGVFHSVAAKYDLMNDLMSFGIHRIWKKQTIAKSGVRKGDNVLDLAGGTGDLAYKFCQMVGQQGKVILSDINSSMLEVGKEKLTNKGCVGNIEYVQANAECLPFPDNYFDCITISFGLRNVTDKDKALASMCRVLKPGGRLLVLEFSKPIIPLLSKVYDEYSFKALPFLGKIITQDAESYKYLAESIRKHPDQQTLKQMMYDAGFDNVEYQNMTGGIVALHIGYKY</sequence>
<organism>
    <name type="scientific">Francisella tularensis subsp. mediasiatica (strain FSC147)</name>
    <dbReference type="NCBI Taxonomy" id="441952"/>
    <lineage>
        <taxon>Bacteria</taxon>
        <taxon>Pseudomonadati</taxon>
        <taxon>Pseudomonadota</taxon>
        <taxon>Gammaproteobacteria</taxon>
        <taxon>Thiotrichales</taxon>
        <taxon>Francisellaceae</taxon>
        <taxon>Francisella</taxon>
    </lineage>
</organism>
<comment type="function">
    <text evidence="1">Methyltransferase required for the conversion of demethylmenaquinol (DMKH2) to menaquinol (MKH2) and the conversion of 2-polyprenyl-6-methoxy-1,4-benzoquinol (DDMQH2) to 2-polyprenyl-3-methyl-6-methoxy-1,4-benzoquinol (DMQH2).</text>
</comment>
<comment type="catalytic activity">
    <reaction evidence="1">
        <text>a 2-demethylmenaquinol + S-adenosyl-L-methionine = a menaquinol + S-adenosyl-L-homocysteine + H(+)</text>
        <dbReference type="Rhea" id="RHEA:42640"/>
        <dbReference type="Rhea" id="RHEA-COMP:9539"/>
        <dbReference type="Rhea" id="RHEA-COMP:9563"/>
        <dbReference type="ChEBI" id="CHEBI:15378"/>
        <dbReference type="ChEBI" id="CHEBI:18151"/>
        <dbReference type="ChEBI" id="CHEBI:55437"/>
        <dbReference type="ChEBI" id="CHEBI:57856"/>
        <dbReference type="ChEBI" id="CHEBI:59789"/>
        <dbReference type="EC" id="2.1.1.163"/>
    </reaction>
</comment>
<comment type="catalytic activity">
    <reaction evidence="1">
        <text>a 2-methoxy-6-(all-trans-polyprenyl)benzene-1,4-diol + S-adenosyl-L-methionine = a 5-methoxy-2-methyl-3-(all-trans-polyprenyl)benzene-1,4-diol + S-adenosyl-L-homocysteine + H(+)</text>
        <dbReference type="Rhea" id="RHEA:28286"/>
        <dbReference type="Rhea" id="RHEA-COMP:10858"/>
        <dbReference type="Rhea" id="RHEA-COMP:10859"/>
        <dbReference type="ChEBI" id="CHEBI:15378"/>
        <dbReference type="ChEBI" id="CHEBI:57856"/>
        <dbReference type="ChEBI" id="CHEBI:59789"/>
        <dbReference type="ChEBI" id="CHEBI:84166"/>
        <dbReference type="ChEBI" id="CHEBI:84167"/>
        <dbReference type="EC" id="2.1.1.201"/>
    </reaction>
</comment>
<comment type="pathway">
    <text evidence="1">Quinol/quinone metabolism; menaquinone biosynthesis; menaquinol from 1,4-dihydroxy-2-naphthoate: step 2/2.</text>
</comment>
<comment type="pathway">
    <text evidence="1">Cofactor biosynthesis; ubiquinone biosynthesis.</text>
</comment>
<comment type="similarity">
    <text evidence="1">Belongs to the class I-like SAM-binding methyltransferase superfamily. MenG/UbiE family.</text>
</comment>
<accession>B2SFA2</accession>
<reference key="1">
    <citation type="journal article" date="2009" name="PLoS Pathog.">
        <title>Molecular evolutionary consequences of niche restriction in Francisella tularensis, a facultative intracellular pathogen.</title>
        <authorList>
            <person name="Larsson P."/>
            <person name="Elfsmark D."/>
            <person name="Svensson K."/>
            <person name="Wikstroem P."/>
            <person name="Forsman M."/>
            <person name="Brettin T."/>
            <person name="Keim P."/>
            <person name="Johansson A."/>
        </authorList>
    </citation>
    <scope>NUCLEOTIDE SEQUENCE [LARGE SCALE GENOMIC DNA]</scope>
    <source>
        <strain>FSC147</strain>
    </source>
</reference>
<keyword id="KW-0474">Menaquinone biosynthesis</keyword>
<keyword id="KW-0489">Methyltransferase</keyword>
<keyword id="KW-0949">S-adenosyl-L-methionine</keyword>
<keyword id="KW-0808">Transferase</keyword>
<keyword id="KW-0831">Ubiquinone biosynthesis</keyword>
<protein>
    <recommendedName>
        <fullName evidence="1">Ubiquinone/menaquinone biosynthesis C-methyltransferase UbiE</fullName>
        <ecNumber evidence="1">2.1.1.163</ecNumber>
        <ecNumber evidence="1">2.1.1.201</ecNumber>
    </recommendedName>
    <alternativeName>
        <fullName evidence="1">2-methoxy-6-polyprenyl-1,4-benzoquinol methylase</fullName>
    </alternativeName>
    <alternativeName>
        <fullName evidence="1">Demethylmenaquinone methyltransferase</fullName>
    </alternativeName>
</protein>
<name>UBIE_FRATM</name>
<evidence type="ECO:0000255" key="1">
    <source>
        <dbReference type="HAMAP-Rule" id="MF_01813"/>
    </source>
</evidence>